<comment type="function">
    <text evidence="4">Component of the sulfite reductase complex that catalyzes the 6-electron reduction of sulfite to sulfide. This is one of several activities required for the biosynthesis of L-cysteine from sulfate (Probable).</text>
</comment>
<comment type="catalytic activity">
    <reaction>
        <text>hydrogen sulfide + 3 NADP(+) + 3 H2O = sulfite + 3 NADPH + 4 H(+)</text>
        <dbReference type="Rhea" id="RHEA:13801"/>
        <dbReference type="ChEBI" id="CHEBI:15377"/>
        <dbReference type="ChEBI" id="CHEBI:15378"/>
        <dbReference type="ChEBI" id="CHEBI:17359"/>
        <dbReference type="ChEBI" id="CHEBI:29919"/>
        <dbReference type="ChEBI" id="CHEBI:57783"/>
        <dbReference type="ChEBI" id="CHEBI:58349"/>
        <dbReference type="EC" id="1.8.1.2"/>
    </reaction>
</comment>
<comment type="cofactor">
    <cofactor evidence="1">
        <name>siroheme</name>
        <dbReference type="ChEBI" id="CHEBI:60052"/>
    </cofactor>
    <text evidence="1">Binds 1 siroheme per subunit.</text>
</comment>
<comment type="cofactor">
    <cofactor evidence="1">
        <name>[4Fe-4S] cluster</name>
        <dbReference type="ChEBI" id="CHEBI:49883"/>
    </cofactor>
    <text evidence="1">Binds 1 [4Fe-4S] cluster per subunit.</text>
</comment>
<comment type="pathway">
    <text>Sulfur metabolism; hydrogen sulfide biosynthesis; hydrogen sulfide from sulfite (NADPH route): step 1/1.</text>
</comment>
<comment type="subunit">
    <text evidence="1">Alpha(8)-beta(8). The alpha component is a flavoprotein, the beta component is a hemoprotein (By similarity).</text>
</comment>
<comment type="disruption phenotype">
    <text evidence="2">Cells lacking this gene display a blocked APS- (adenosine-5'-phosphosulfate) or PAPS- (3'-phosphoadenosine-5'-phosphosulfate) dependent cysteine synthesis but do retain AvrXa21 activity.</text>
</comment>
<comment type="similarity">
    <text evidence="3">Belongs to the nitrite and sulfite reductase 4Fe-4S domain family.</text>
</comment>
<comment type="sequence caution" evidence="3">
    <conflict type="erroneous initiation">
        <sequence resource="EMBL-CDS" id="AAL05935"/>
    </conflict>
</comment>
<comment type="sequence caution" evidence="3">
    <conflict type="erroneous initiation">
        <sequence resource="EMBL-CDS" id="AAW76654"/>
    </conflict>
</comment>
<sequence>MSHSVEDIKSESRRLRGSLEQSLADAVTGALREDDQTLIKYHGSYQQDDRDIRDERRQQKLEPAYQFMIRTRTPGGVITPAQWLALDGIATRYANHSLRITTRQAFQFHGVIKRELKATMQAINATLIDTLAACGDVNRNVQVAANPLLSQAHATLYADAACVSEHLLPNTRAYYEIWLDEERVSGSGNEDEPIYGDRYLPRKFKIGFAAPPLNDVDVFANDLGFIAILRDGRLLGYNVSIGGGMGASHGDAQTWPRVANVIGFVTRDQLLDIATAVVTTQRDFGNRAVRKRARFKYTIDDHGLDTIVAEIARRAGFALQPAQPFAFEHNGDRYGWVEGEDGLWHLTLSLPAGRIADTDTATHLSGLRAIAQLNVGEFRMTPNQNLVIAGVPASERARVDALVAQYALDAGNRSASALARGAMACVALPTCGLAMAEAERYLPDFSAALQPLLQQHGLADTPIVLRLSGCPNGCSRPYLAEIALVGKAPGRYNLMLGGDRRGQRLNTLYRENITEPEILAALEPLLARYAAERDHANDEGFGDFLHRAGLIALPSYPTHRRLDLELLA</sequence>
<proteinExistence type="evidence at protein level"/>
<gene>
    <name type="primary">cysI</name>
    <name type="synonym">xcysI</name>
    <name type="ordered locus">XOO3400</name>
</gene>
<feature type="chain" id="PRO_0000388532" description="Sulfite reductase [NADPH] hemoprotein beta-component">
    <location>
        <begin position="1"/>
        <end position="568"/>
    </location>
</feature>
<feature type="binding site" evidence="1">
    <location>
        <position position="425"/>
    </location>
    <ligand>
        <name>[4Fe-4S] cluster</name>
        <dbReference type="ChEBI" id="CHEBI:49883"/>
    </ligand>
</feature>
<feature type="binding site" evidence="1">
    <location>
        <position position="431"/>
    </location>
    <ligand>
        <name>[4Fe-4S] cluster</name>
        <dbReference type="ChEBI" id="CHEBI:49883"/>
    </ligand>
</feature>
<feature type="binding site" evidence="1">
    <location>
        <position position="470"/>
    </location>
    <ligand>
        <name>[4Fe-4S] cluster</name>
        <dbReference type="ChEBI" id="CHEBI:49883"/>
    </ligand>
</feature>
<feature type="binding site" evidence="1">
    <location>
        <position position="474"/>
    </location>
    <ligand>
        <name>[4Fe-4S] cluster</name>
        <dbReference type="ChEBI" id="CHEBI:49883"/>
    </ligand>
</feature>
<feature type="binding site" description="axial binding residue" evidence="1">
    <location>
        <position position="474"/>
    </location>
    <ligand>
        <name>siroheme</name>
        <dbReference type="ChEBI" id="CHEBI:60052"/>
    </ligand>
    <ligandPart>
        <name>Fe</name>
        <dbReference type="ChEBI" id="CHEBI:18248"/>
    </ligandPart>
</feature>
<protein>
    <recommendedName>
        <fullName>Sulfite reductase [NADPH] hemoprotein beta-component</fullName>
        <shortName>SiR-HP</shortName>
        <shortName>SiRHP</shortName>
        <ecNumber>1.8.1.2</ecNumber>
    </recommendedName>
</protein>
<dbReference type="EC" id="1.8.1.2"/>
<dbReference type="EMBL" id="AY056057">
    <property type="protein sequence ID" value="AAL05935.1"/>
    <property type="status" value="ALT_INIT"/>
    <property type="molecule type" value="Genomic_DNA"/>
</dbReference>
<dbReference type="EMBL" id="AE013598">
    <property type="protein sequence ID" value="AAW76654.1"/>
    <property type="status" value="ALT_INIT"/>
    <property type="molecule type" value="Genomic_DNA"/>
</dbReference>
<dbReference type="SMR" id="Q8KQT8"/>
<dbReference type="STRING" id="291331.XOO3400"/>
<dbReference type="KEGG" id="xoo:XOO3400"/>
<dbReference type="PATRIC" id="fig|291331.8.peg.3763"/>
<dbReference type="HOGENOM" id="CLU_001975_3_2_6"/>
<dbReference type="UniPathway" id="UPA00140">
    <property type="reaction ID" value="UER00207"/>
</dbReference>
<dbReference type="Proteomes" id="UP000006735">
    <property type="component" value="Chromosome"/>
</dbReference>
<dbReference type="GO" id="GO:0009337">
    <property type="term" value="C:sulfite reductase complex (NADPH)"/>
    <property type="evidence" value="ECO:0007669"/>
    <property type="project" value="InterPro"/>
</dbReference>
<dbReference type="GO" id="GO:0051539">
    <property type="term" value="F:4 iron, 4 sulfur cluster binding"/>
    <property type="evidence" value="ECO:0007669"/>
    <property type="project" value="UniProtKB-KW"/>
</dbReference>
<dbReference type="GO" id="GO:0020037">
    <property type="term" value="F:heme binding"/>
    <property type="evidence" value="ECO:0007669"/>
    <property type="project" value="InterPro"/>
</dbReference>
<dbReference type="GO" id="GO:0046872">
    <property type="term" value="F:metal ion binding"/>
    <property type="evidence" value="ECO:0007669"/>
    <property type="project" value="UniProtKB-KW"/>
</dbReference>
<dbReference type="GO" id="GO:0050661">
    <property type="term" value="F:NADP binding"/>
    <property type="evidence" value="ECO:0007669"/>
    <property type="project" value="InterPro"/>
</dbReference>
<dbReference type="GO" id="GO:0050311">
    <property type="term" value="F:sulfite reductase (ferredoxin) activity"/>
    <property type="evidence" value="ECO:0007669"/>
    <property type="project" value="TreeGrafter"/>
</dbReference>
<dbReference type="GO" id="GO:0004783">
    <property type="term" value="F:sulfite reductase (NADPH) activity"/>
    <property type="evidence" value="ECO:0007669"/>
    <property type="project" value="UniProtKB-UniRule"/>
</dbReference>
<dbReference type="GO" id="GO:0019344">
    <property type="term" value="P:cysteine biosynthetic process"/>
    <property type="evidence" value="ECO:0007669"/>
    <property type="project" value="UniProtKB-KW"/>
</dbReference>
<dbReference type="GO" id="GO:0070814">
    <property type="term" value="P:hydrogen sulfide biosynthetic process"/>
    <property type="evidence" value="ECO:0007669"/>
    <property type="project" value="UniProtKB-UniRule"/>
</dbReference>
<dbReference type="GO" id="GO:0000103">
    <property type="term" value="P:sulfate assimilation"/>
    <property type="evidence" value="ECO:0007669"/>
    <property type="project" value="UniProtKB-UniRule"/>
</dbReference>
<dbReference type="FunFam" id="3.30.413.10:FF:000003">
    <property type="entry name" value="Sulfite reductase [NADPH] hemoprotein beta-component"/>
    <property type="match status" value="1"/>
</dbReference>
<dbReference type="Gene3D" id="3.30.413.10">
    <property type="entry name" value="Sulfite Reductase Hemoprotein, domain 1"/>
    <property type="match status" value="2"/>
</dbReference>
<dbReference type="HAMAP" id="MF_01540">
    <property type="entry name" value="CysI"/>
    <property type="match status" value="1"/>
</dbReference>
<dbReference type="InterPro" id="IPR011786">
    <property type="entry name" value="CysI"/>
</dbReference>
<dbReference type="InterPro" id="IPR005117">
    <property type="entry name" value="NiRdtase/SiRdtase_haem-b_fer"/>
</dbReference>
<dbReference type="InterPro" id="IPR036136">
    <property type="entry name" value="Nit/Sulf_reduc_fer-like_dom_sf"/>
</dbReference>
<dbReference type="InterPro" id="IPR006067">
    <property type="entry name" value="NO2/SO3_Rdtase_4Fe4S_dom"/>
</dbReference>
<dbReference type="InterPro" id="IPR045169">
    <property type="entry name" value="NO2/SO3_Rdtase_4Fe4S_prot"/>
</dbReference>
<dbReference type="InterPro" id="IPR045854">
    <property type="entry name" value="NO2/SO3_Rdtase_4Fe4S_sf"/>
</dbReference>
<dbReference type="InterPro" id="IPR006066">
    <property type="entry name" value="NO2/SO3_Rdtase_FeS/sirohaem_BS"/>
</dbReference>
<dbReference type="NCBIfam" id="TIGR02041">
    <property type="entry name" value="CysI"/>
    <property type="match status" value="1"/>
</dbReference>
<dbReference type="NCBIfam" id="NF010029">
    <property type="entry name" value="PRK13504.1"/>
    <property type="match status" value="1"/>
</dbReference>
<dbReference type="PANTHER" id="PTHR11493:SF47">
    <property type="entry name" value="SULFITE REDUCTASE [NADPH] SUBUNIT BETA"/>
    <property type="match status" value="1"/>
</dbReference>
<dbReference type="PANTHER" id="PTHR11493">
    <property type="entry name" value="SULFITE REDUCTASE [NADPH] SUBUNIT BETA-RELATED"/>
    <property type="match status" value="1"/>
</dbReference>
<dbReference type="Pfam" id="PF01077">
    <property type="entry name" value="NIR_SIR"/>
    <property type="match status" value="1"/>
</dbReference>
<dbReference type="Pfam" id="PF03460">
    <property type="entry name" value="NIR_SIR_ferr"/>
    <property type="match status" value="2"/>
</dbReference>
<dbReference type="PRINTS" id="PR00397">
    <property type="entry name" value="SIROHAEM"/>
</dbReference>
<dbReference type="SUPFAM" id="SSF56014">
    <property type="entry name" value="Nitrite and sulphite reductase 4Fe-4S domain-like"/>
    <property type="match status" value="2"/>
</dbReference>
<dbReference type="SUPFAM" id="SSF55124">
    <property type="entry name" value="Nitrite/Sulfite reductase N-terminal domain-like"/>
    <property type="match status" value="2"/>
</dbReference>
<dbReference type="PROSITE" id="PS00365">
    <property type="entry name" value="NIR_SIR"/>
    <property type="match status" value="1"/>
</dbReference>
<reference key="1">
    <citation type="journal article" date="2002" name="Mol. Microbiol.">
        <title>The Xanthomonas oryzae pv. oryzae raxP and raxQ genes encode an ATP sulphurylase and adenosine-5'-phosphosulphate kinase that are required for AvrXa21 avirulence activity.</title>
        <authorList>
            <person name="Shen Y."/>
            <person name="Sharma P."/>
            <person name="da Silva F.G."/>
            <person name="Ronald P."/>
        </authorList>
    </citation>
    <scope>NUCLEOTIDE SEQUENCE [GENOMIC DNA]</scope>
    <scope>FUNCTION IN CYSTEINE BIOSYNTHESIS</scope>
    <scope>DISRUPTION PHENOTYPE</scope>
</reference>
<reference key="2">
    <citation type="journal article" date="2005" name="Nucleic Acids Res.">
        <title>The genome sequence of Xanthomonas oryzae pathovar oryzae KACC10331, the bacterial blight pathogen of rice.</title>
        <authorList>
            <person name="Lee B.-M."/>
            <person name="Park Y.-J."/>
            <person name="Park D.-S."/>
            <person name="Kang H.-W."/>
            <person name="Kim J.-G."/>
            <person name="Song E.-S."/>
            <person name="Park I.-C."/>
            <person name="Yoon U.-H."/>
            <person name="Hahn J.-H."/>
            <person name="Koo B.-S."/>
            <person name="Lee G.-B."/>
            <person name="Kim H."/>
            <person name="Park H.-S."/>
            <person name="Yoon K.-O."/>
            <person name="Kim J.-H."/>
            <person name="Jung C.-H."/>
            <person name="Koh N.-H."/>
            <person name="Seo J.-S."/>
            <person name="Go S.-J."/>
        </authorList>
    </citation>
    <scope>NUCLEOTIDE SEQUENCE [LARGE SCALE GENOMIC DNA]</scope>
    <source>
        <strain>KACC10331 / KXO85</strain>
    </source>
</reference>
<accession>Q8KQT8</accession>
<accession>Q5GXB7</accession>
<organism>
    <name type="scientific">Xanthomonas oryzae pv. oryzae (strain KACC10331 / KXO85)</name>
    <dbReference type="NCBI Taxonomy" id="291331"/>
    <lineage>
        <taxon>Bacteria</taxon>
        <taxon>Pseudomonadati</taxon>
        <taxon>Pseudomonadota</taxon>
        <taxon>Gammaproteobacteria</taxon>
        <taxon>Lysobacterales</taxon>
        <taxon>Lysobacteraceae</taxon>
        <taxon>Xanthomonas</taxon>
    </lineage>
</organism>
<keyword id="KW-0004">4Fe-4S</keyword>
<keyword id="KW-0028">Amino-acid biosynthesis</keyword>
<keyword id="KW-0198">Cysteine biosynthesis</keyword>
<keyword id="KW-0349">Heme</keyword>
<keyword id="KW-0408">Iron</keyword>
<keyword id="KW-0411">Iron-sulfur</keyword>
<keyword id="KW-0479">Metal-binding</keyword>
<keyword id="KW-0521">NADP</keyword>
<keyword id="KW-0560">Oxidoreductase</keyword>
<keyword id="KW-1185">Reference proteome</keyword>
<name>CYSI_XANOR</name>
<evidence type="ECO:0000250" key="1"/>
<evidence type="ECO:0000269" key="2">
    <source>
    </source>
</evidence>
<evidence type="ECO:0000305" key="3"/>
<evidence type="ECO:0000305" key="4">
    <source>
    </source>
</evidence>